<accession>Q7W2U8</accession>
<name>TOX1_BORPA</name>
<protein>
    <recommendedName>
        <fullName>Pertussis toxin subunit 1 homolog</fullName>
    </recommendedName>
</protein>
<sequence>MRCTRAIRQTARTGWLTWLAILAVTAPMTSPAWADDPPATVYRYDSRPPEDVFQNGFTAWGNNDNVLEHLTGRSCQVGSSNSAFVSTSSSRRYTEVYLEHRMQEAVEAERAGRGTGHFIGYIYEIRADNNFYGAASSYFEYVDTYGDNAGRILAGALATYQSEYLAHRRIPPENIRTVTRVYHNGITGETTTTEYPNLRYVSQQTRANTNPYTSRRSTASIVGTLVRMAPVTGACMARQAESPEAMAAWSERTGEAMVLVYYESIAYSF</sequence>
<keyword id="KW-0732">Signal</keyword>
<reference key="1">
    <citation type="journal article" date="2003" name="Nat. Genet.">
        <title>Comparative analysis of the genome sequences of Bordetella pertussis, Bordetella parapertussis and Bordetella bronchiseptica.</title>
        <authorList>
            <person name="Parkhill J."/>
            <person name="Sebaihia M."/>
            <person name="Preston A."/>
            <person name="Murphy L.D."/>
            <person name="Thomson N.R."/>
            <person name="Harris D.E."/>
            <person name="Holden M.T.G."/>
            <person name="Churcher C.M."/>
            <person name="Bentley S.D."/>
            <person name="Mungall K.L."/>
            <person name="Cerdeno-Tarraga A.-M."/>
            <person name="Temple L."/>
            <person name="James K.D."/>
            <person name="Harris B."/>
            <person name="Quail M.A."/>
            <person name="Achtman M."/>
            <person name="Atkin R."/>
            <person name="Baker S."/>
            <person name="Basham D."/>
            <person name="Bason N."/>
            <person name="Cherevach I."/>
            <person name="Chillingworth T."/>
            <person name="Collins M."/>
            <person name="Cronin A."/>
            <person name="Davis P."/>
            <person name="Doggett J."/>
            <person name="Feltwell T."/>
            <person name="Goble A."/>
            <person name="Hamlin N."/>
            <person name="Hauser H."/>
            <person name="Holroyd S."/>
            <person name="Jagels K."/>
            <person name="Leather S."/>
            <person name="Moule S."/>
            <person name="Norberczak H."/>
            <person name="O'Neil S."/>
            <person name="Ormond D."/>
            <person name="Price C."/>
            <person name="Rabbinowitsch E."/>
            <person name="Rutter S."/>
            <person name="Sanders M."/>
            <person name="Saunders D."/>
            <person name="Seeger K."/>
            <person name="Sharp S."/>
            <person name="Simmonds M."/>
            <person name="Skelton J."/>
            <person name="Squares R."/>
            <person name="Squares S."/>
            <person name="Stevens K."/>
            <person name="Unwin L."/>
            <person name="Whitehead S."/>
            <person name="Barrell B.G."/>
            <person name="Maskell D.J."/>
        </authorList>
    </citation>
    <scope>NUCLEOTIDE SEQUENCE [LARGE SCALE GENOMIC DNA]</scope>
    <source>
        <strain>12822 / ATCC BAA-587 / NCTC 13253</strain>
    </source>
</reference>
<reference key="2">
    <citation type="journal article" date="1987" name="J. Bacteriol.">
        <title>Bordetella parapertussis and Bordetella bronchiseptica contain transcriptionally silent pertussis toxin genes.</title>
        <authorList>
            <person name="Arico B."/>
            <person name="Rappuoli R."/>
        </authorList>
    </citation>
    <scope>TRANSCRIPTIONAL SILENCING</scope>
    <source>
        <strain>ATCC 9305</strain>
    </source>
</reference>
<reference key="3">
    <citation type="journal article" date="1996" name="Infect. Immun.">
        <title>Analysis of proteins encoded by the ptx and ptl genes of Bordetella bronchiseptica and Bordetella parapertussis.</title>
        <authorList>
            <person name="Hausman S.Z."/>
            <person name="Cherry J.D."/>
            <person name="Heininger U."/>
            <person name="Wirsing von Koenig C.H."/>
            <person name="Burns D.L."/>
        </authorList>
    </citation>
    <scope>POSSIBLE EXPRESSION OF PTL AND PTX PROTEINS UNDER CONDITIONS DIFFERENT FROM B.PERTUSSIS EXPRESSION CONDITIONS</scope>
    <source>
        <strain>10978</strain>
        <strain>13449</strain>
    </source>
</reference>
<feature type="signal peptide" evidence="1">
    <location>
        <begin position="1"/>
        <end position="34"/>
    </location>
</feature>
<feature type="chain" id="PRO_0000251142" description="Pertussis toxin subunit 1 homolog">
    <location>
        <begin position="35"/>
        <end position="269"/>
    </location>
</feature>
<gene>
    <name type="primary">ptxA</name>
    <name type="ordered locus">BPP4304</name>
</gene>
<dbReference type="EMBL" id="BX640436">
    <property type="protein sequence ID" value="CAE39582.1"/>
    <property type="molecule type" value="Genomic_DNA"/>
</dbReference>
<dbReference type="RefSeq" id="WP_010929490.1">
    <property type="nucleotide sequence ID" value="NC_002928.3"/>
</dbReference>
<dbReference type="SMR" id="Q7W2U8"/>
<dbReference type="GeneID" id="93206102"/>
<dbReference type="KEGG" id="bpa:BPP4304"/>
<dbReference type="HOGENOM" id="CLU_1145818_0_0_4"/>
<dbReference type="Proteomes" id="UP000001421">
    <property type="component" value="Chromosome"/>
</dbReference>
<dbReference type="GO" id="GO:0005576">
    <property type="term" value="C:extracellular region"/>
    <property type="evidence" value="ECO:0007669"/>
    <property type="project" value="InterPro"/>
</dbReference>
<dbReference type="GO" id="GO:0003950">
    <property type="term" value="F:NAD+ poly-ADP-ribosyltransferase activity"/>
    <property type="evidence" value="ECO:0007669"/>
    <property type="project" value="InterPro"/>
</dbReference>
<dbReference type="Gene3D" id="3.90.210.10">
    <property type="entry name" value="Heat-Labile Enterotoxin, subunit A"/>
    <property type="match status" value="1"/>
</dbReference>
<dbReference type="InterPro" id="IPR003898">
    <property type="entry name" value="Borpert_toxA"/>
</dbReference>
<dbReference type="Pfam" id="PF02917">
    <property type="entry name" value="Pertussis_S1"/>
    <property type="match status" value="1"/>
</dbReference>
<dbReference type="PRINTS" id="PR01395">
    <property type="entry name" value="BORPETOXINA"/>
</dbReference>
<dbReference type="SUPFAM" id="SSF56399">
    <property type="entry name" value="ADP-ribosylation"/>
    <property type="match status" value="1"/>
</dbReference>
<comment type="similarity">
    <text evidence="2">Belongs to the bacterial exotoxin subunit A family.</text>
</comment>
<comment type="caution">
    <text evidence="2">B.parapertussis and B.bronchiseptica seem not to produce the pertussis toxin (S1, S2, S4, S5 and S3) and Ptl proteins (PtlA, PtlB, PtlC, PtlD, PtlE, PtlF, PtlG, PtlH and PtlI) in vivo due to changes in the promoter region of the ptx-ptl operon. However, it is possible that their promoter is active under certain, as-yet-undefined conditions and that B.parapertussis and B.bronchiseptica are therefore capable of producing these proteins.</text>
</comment>
<proteinExistence type="inferred from homology"/>
<organism>
    <name type="scientific">Bordetella parapertussis (strain 12822 / ATCC BAA-587 / NCTC 13253)</name>
    <dbReference type="NCBI Taxonomy" id="257311"/>
    <lineage>
        <taxon>Bacteria</taxon>
        <taxon>Pseudomonadati</taxon>
        <taxon>Pseudomonadota</taxon>
        <taxon>Betaproteobacteria</taxon>
        <taxon>Burkholderiales</taxon>
        <taxon>Alcaligenaceae</taxon>
        <taxon>Bordetella</taxon>
    </lineage>
</organism>
<evidence type="ECO:0000255" key="1"/>
<evidence type="ECO:0000305" key="2"/>